<sequence length="502" mass="57844">MLSDCLLNNFRITAQIGSGAYGLVFHVVDILTSREYAVKTVFKSSSMDEFYNKNGLNNNSQVARTTLLQTQLYHFFKSFQKKLFLPSVDLDSILQLTENELNRLPHYREIAFQLRVQSHGNIVKIHQVLESSIATFIVMDYYDRDLFTSIVDDKHFVNHGILIKKVFLQLCSALDHCHRLGIYHCDIKPENVLLDRNDNAYLCDFGLSTKSKYLAPNVCVGSSYYMAPERILYCLNTTTNGIHVDECCSSLPTDTGDIWSLGIILINLTCIRNPWLKAHQKEDNTFQHFANDNNVLKKILPISDELFTVLTKILQLNPYTRIDMKTLMSEVSSLTSFTREGPLSQVPILSSEVYMTHIIRNENLFLSDLSHFSADQEQQQQQQQQQQQVQEQEQEQKQEQIQNQEQAQQQQEEEDAEPESDIPSTYNSDGSMEKYEYTNNHNNSTFLTSSMDSTPYQSDIDDVSASKDCKFQQDTLRNRLLCLQMNFSTLTDGPNEKWLPDY</sequence>
<organism>
    <name type="scientific">Saccharomyces cerevisiae (strain ATCC 204508 / S288c)</name>
    <name type="common">Baker's yeast</name>
    <dbReference type="NCBI Taxonomy" id="559292"/>
    <lineage>
        <taxon>Eukaryota</taxon>
        <taxon>Fungi</taxon>
        <taxon>Dikarya</taxon>
        <taxon>Ascomycota</taxon>
        <taxon>Saccharomycotina</taxon>
        <taxon>Saccharomycetes</taxon>
        <taxon>Saccharomycetales</taxon>
        <taxon>Saccharomycetaceae</taxon>
        <taxon>Saccharomyces</taxon>
    </lineage>
</organism>
<dbReference type="EC" id="2.7.11.1"/>
<dbReference type="EMBL" id="U30613">
    <property type="protein sequence ID" value="AAC49570.1"/>
    <property type="molecule type" value="Genomic_DNA"/>
</dbReference>
<dbReference type="EMBL" id="U36624">
    <property type="protein sequence ID" value="AAB68161.1"/>
    <property type="molecule type" value="Genomic_DNA"/>
</dbReference>
<dbReference type="EMBL" id="BK006949">
    <property type="protein sequence ID" value="DAA11403.1"/>
    <property type="molecule type" value="Genomic_DNA"/>
</dbReference>
<dbReference type="PIR" id="S61935">
    <property type="entry name" value="S61935"/>
</dbReference>
<dbReference type="RefSeq" id="NP_015299.1">
    <property type="nucleotide sequence ID" value="NM_001183840.1"/>
</dbReference>
<dbReference type="BioGRID" id="36152">
    <property type="interactions" value="148"/>
</dbReference>
<dbReference type="DIP" id="DIP-2879N"/>
<dbReference type="FunCoup" id="Q12505">
    <property type="interactions" value="373"/>
</dbReference>
<dbReference type="IntAct" id="Q12505">
    <property type="interactions" value="27"/>
</dbReference>
<dbReference type="MINT" id="Q12505"/>
<dbReference type="STRING" id="4932.YPL026C"/>
<dbReference type="iPTMnet" id="Q12505"/>
<dbReference type="PaxDb" id="4932-YPL026C"/>
<dbReference type="PeptideAtlas" id="Q12505"/>
<dbReference type="EnsemblFungi" id="YPL026C_mRNA">
    <property type="protein sequence ID" value="YPL026C"/>
    <property type="gene ID" value="YPL026C"/>
</dbReference>
<dbReference type="GeneID" id="856081"/>
<dbReference type="KEGG" id="sce:YPL026C"/>
<dbReference type="AGR" id="SGD:S000005947"/>
<dbReference type="SGD" id="S000005947">
    <property type="gene designation" value="SKS1"/>
</dbReference>
<dbReference type="VEuPathDB" id="FungiDB:YPL026C"/>
<dbReference type="eggNOG" id="KOG0583">
    <property type="taxonomic scope" value="Eukaryota"/>
</dbReference>
<dbReference type="GeneTree" id="ENSGT00940000176825"/>
<dbReference type="HOGENOM" id="CLU_000288_172_4_1"/>
<dbReference type="InParanoid" id="Q12505"/>
<dbReference type="OMA" id="ICCNACR"/>
<dbReference type="OrthoDB" id="541276at2759"/>
<dbReference type="BioCyc" id="YEAST:G3O-33942-MONOMER"/>
<dbReference type="BRENDA" id="2.7.11.1">
    <property type="organism ID" value="984"/>
</dbReference>
<dbReference type="BioGRID-ORCS" id="856081">
    <property type="hits" value="0 hits in 13 CRISPR screens"/>
</dbReference>
<dbReference type="PRO" id="PR:Q12505"/>
<dbReference type="Proteomes" id="UP000002311">
    <property type="component" value="Chromosome XVI"/>
</dbReference>
<dbReference type="RNAct" id="Q12505">
    <property type="molecule type" value="protein"/>
</dbReference>
<dbReference type="GO" id="GO:0005737">
    <property type="term" value="C:cytoplasm"/>
    <property type="evidence" value="ECO:0007005"/>
    <property type="project" value="SGD"/>
</dbReference>
<dbReference type="GO" id="GO:0005634">
    <property type="term" value="C:nucleus"/>
    <property type="evidence" value="ECO:0000314"/>
    <property type="project" value="SGD"/>
</dbReference>
<dbReference type="GO" id="GO:0005524">
    <property type="term" value="F:ATP binding"/>
    <property type="evidence" value="ECO:0007669"/>
    <property type="project" value="UniProtKB-KW"/>
</dbReference>
<dbReference type="GO" id="GO:0004672">
    <property type="term" value="F:protein kinase activity"/>
    <property type="evidence" value="ECO:0007005"/>
    <property type="project" value="SGD"/>
</dbReference>
<dbReference type="GO" id="GO:0106310">
    <property type="term" value="F:protein serine kinase activity"/>
    <property type="evidence" value="ECO:0007669"/>
    <property type="project" value="RHEA"/>
</dbReference>
<dbReference type="GO" id="GO:0004674">
    <property type="term" value="F:protein serine/threonine kinase activity"/>
    <property type="evidence" value="ECO:0000250"/>
    <property type="project" value="SGD"/>
</dbReference>
<dbReference type="GO" id="GO:0000086">
    <property type="term" value="P:G2/M transition of mitotic cell cycle"/>
    <property type="evidence" value="ECO:0000318"/>
    <property type="project" value="GO_Central"/>
</dbReference>
<dbReference type="GO" id="GO:0045944">
    <property type="term" value="P:positive regulation of transcription by RNA polymerase II"/>
    <property type="evidence" value="ECO:0000316"/>
    <property type="project" value="SGD"/>
</dbReference>
<dbReference type="GO" id="GO:0007124">
    <property type="term" value="P:pseudohyphal growth"/>
    <property type="evidence" value="ECO:0000315"/>
    <property type="project" value="SGD"/>
</dbReference>
<dbReference type="GO" id="GO:0010506">
    <property type="term" value="P:regulation of autophagy"/>
    <property type="evidence" value="ECO:0007669"/>
    <property type="project" value="InterPro"/>
</dbReference>
<dbReference type="GO" id="GO:0010827">
    <property type="term" value="P:regulation of D-glucose transmembrane transport"/>
    <property type="evidence" value="ECO:0000316"/>
    <property type="project" value="SGD"/>
</dbReference>
<dbReference type="FunFam" id="1.10.510.10:FF:000873">
    <property type="entry name" value="Serine/threonine-protein kinase VHS1"/>
    <property type="match status" value="1"/>
</dbReference>
<dbReference type="Gene3D" id="3.30.200.20">
    <property type="entry name" value="Phosphorylase Kinase, domain 1"/>
    <property type="match status" value="1"/>
</dbReference>
<dbReference type="Gene3D" id="1.10.510.10">
    <property type="entry name" value="Transferase(Phosphotransferase) domain 1"/>
    <property type="match status" value="1"/>
</dbReference>
<dbReference type="InterPro" id="IPR045269">
    <property type="entry name" value="Atg1-like"/>
</dbReference>
<dbReference type="InterPro" id="IPR011009">
    <property type="entry name" value="Kinase-like_dom_sf"/>
</dbReference>
<dbReference type="InterPro" id="IPR000719">
    <property type="entry name" value="Prot_kinase_dom"/>
</dbReference>
<dbReference type="InterPro" id="IPR017441">
    <property type="entry name" value="Protein_kinase_ATP_BS"/>
</dbReference>
<dbReference type="InterPro" id="IPR008271">
    <property type="entry name" value="Ser/Thr_kinase_AS"/>
</dbReference>
<dbReference type="PANTHER" id="PTHR24348:SF22">
    <property type="entry name" value="NON-SPECIFIC SERINE_THREONINE PROTEIN KINASE"/>
    <property type="match status" value="1"/>
</dbReference>
<dbReference type="PANTHER" id="PTHR24348">
    <property type="entry name" value="SERINE/THREONINE-PROTEIN KINASE UNC-51-RELATED"/>
    <property type="match status" value="1"/>
</dbReference>
<dbReference type="Pfam" id="PF00069">
    <property type="entry name" value="Pkinase"/>
    <property type="match status" value="1"/>
</dbReference>
<dbReference type="SMART" id="SM00220">
    <property type="entry name" value="S_TKc"/>
    <property type="match status" value="1"/>
</dbReference>
<dbReference type="SUPFAM" id="SSF56112">
    <property type="entry name" value="Protein kinase-like (PK-like)"/>
    <property type="match status" value="1"/>
</dbReference>
<dbReference type="PROSITE" id="PS00107">
    <property type="entry name" value="PROTEIN_KINASE_ATP"/>
    <property type="match status" value="1"/>
</dbReference>
<dbReference type="PROSITE" id="PS50011">
    <property type="entry name" value="PROTEIN_KINASE_DOM"/>
    <property type="match status" value="1"/>
</dbReference>
<dbReference type="PROSITE" id="PS00108">
    <property type="entry name" value="PROTEIN_KINASE_ST"/>
    <property type="match status" value="1"/>
</dbReference>
<feature type="chain" id="PRO_0000086657" description="Serine/threonine-protein kinase SKS1">
    <location>
        <begin position="1"/>
        <end position="502"/>
    </location>
</feature>
<feature type="domain" description="Protein kinase" evidence="1">
    <location>
        <begin position="10"/>
        <end position="338"/>
    </location>
</feature>
<feature type="region of interest" description="Disordered" evidence="3">
    <location>
        <begin position="376"/>
        <end position="439"/>
    </location>
</feature>
<feature type="compositionally biased region" description="Low complexity" evidence="3">
    <location>
        <begin position="376"/>
        <end position="391"/>
    </location>
</feature>
<feature type="compositionally biased region" description="Low complexity" evidence="3">
    <location>
        <begin position="399"/>
        <end position="410"/>
    </location>
</feature>
<feature type="compositionally biased region" description="Acidic residues" evidence="3">
    <location>
        <begin position="411"/>
        <end position="420"/>
    </location>
</feature>
<feature type="active site" description="Proton acceptor" evidence="1 2">
    <location>
        <position position="186"/>
    </location>
</feature>
<feature type="binding site" evidence="1">
    <location>
        <begin position="16"/>
        <end position="24"/>
    </location>
    <ligand>
        <name>ATP</name>
        <dbReference type="ChEBI" id="CHEBI:30616"/>
    </ligand>
</feature>
<feature type="binding site">
    <location>
        <position position="39"/>
    </location>
    <ligand>
        <name>ATP</name>
        <dbReference type="ChEBI" id="CHEBI:30616"/>
    </ligand>
</feature>
<feature type="mutagenesis site" description="Loss of activity.">
    <original>K</original>
    <variation>R</variation>
    <location>
        <position position="39"/>
    </location>
</feature>
<name>SKS1_YEAST</name>
<comment type="function">
    <text>May have a role in glucose regulation.</text>
</comment>
<comment type="catalytic activity">
    <reaction>
        <text>L-seryl-[protein] + ATP = O-phospho-L-seryl-[protein] + ADP + H(+)</text>
        <dbReference type="Rhea" id="RHEA:17989"/>
        <dbReference type="Rhea" id="RHEA-COMP:9863"/>
        <dbReference type="Rhea" id="RHEA-COMP:11604"/>
        <dbReference type="ChEBI" id="CHEBI:15378"/>
        <dbReference type="ChEBI" id="CHEBI:29999"/>
        <dbReference type="ChEBI" id="CHEBI:30616"/>
        <dbReference type="ChEBI" id="CHEBI:83421"/>
        <dbReference type="ChEBI" id="CHEBI:456216"/>
        <dbReference type="EC" id="2.7.11.1"/>
    </reaction>
</comment>
<comment type="catalytic activity">
    <reaction>
        <text>L-threonyl-[protein] + ATP = O-phospho-L-threonyl-[protein] + ADP + H(+)</text>
        <dbReference type="Rhea" id="RHEA:46608"/>
        <dbReference type="Rhea" id="RHEA-COMP:11060"/>
        <dbReference type="Rhea" id="RHEA-COMP:11605"/>
        <dbReference type="ChEBI" id="CHEBI:15378"/>
        <dbReference type="ChEBI" id="CHEBI:30013"/>
        <dbReference type="ChEBI" id="CHEBI:30616"/>
        <dbReference type="ChEBI" id="CHEBI:61977"/>
        <dbReference type="ChEBI" id="CHEBI:456216"/>
        <dbReference type="EC" id="2.7.11.1"/>
    </reaction>
</comment>
<comment type="miscellaneous">
    <text evidence="4">Present with 2810 molecules/cell in log phase SD medium.</text>
</comment>
<comment type="similarity">
    <text evidence="1">Belongs to the protein kinase superfamily. Ser/Thr protein kinase family.</text>
</comment>
<gene>
    <name type="primary">SKS1</name>
    <name type="synonym">SHA3</name>
    <name type="ordered locus">YPL026C</name>
    <name type="ORF">LPB5</name>
</gene>
<accession>Q12505</accession>
<accession>D6W3Y7</accession>
<keyword id="KW-0067">ATP-binding</keyword>
<keyword id="KW-0418">Kinase</keyword>
<keyword id="KW-0547">Nucleotide-binding</keyword>
<keyword id="KW-1185">Reference proteome</keyword>
<keyword id="KW-0723">Serine/threonine-protein kinase</keyword>
<keyword id="KW-0808">Transferase</keyword>
<proteinExistence type="evidence at protein level"/>
<evidence type="ECO:0000255" key="1">
    <source>
        <dbReference type="PROSITE-ProRule" id="PRU00159"/>
    </source>
</evidence>
<evidence type="ECO:0000255" key="2">
    <source>
        <dbReference type="PROSITE-ProRule" id="PRU10027"/>
    </source>
</evidence>
<evidence type="ECO:0000256" key="3">
    <source>
        <dbReference type="SAM" id="MobiDB-lite"/>
    </source>
</evidence>
<evidence type="ECO:0000269" key="4">
    <source>
    </source>
</evidence>
<protein>
    <recommendedName>
        <fullName>Serine/threonine-protein kinase SKS1</fullName>
        <ecNumber>2.7.11.1</ecNumber>
    </recommendedName>
    <alternativeName>
        <fullName>Suppressor kinase of SNF3</fullName>
    </alternativeName>
</protein>
<reference key="1">
    <citation type="journal article" date="1996" name="Yeast">
        <title>The SKS1 protein kinase is a multicopy suppressor of the snf3 mutation of Saccharomyces cerevisiae.</title>
        <authorList>
            <person name="Yang Z."/>
            <person name="Bisson L.F."/>
        </authorList>
    </citation>
    <scope>NUCLEOTIDE SEQUENCE [GENOMIC DNA]</scope>
</reference>
<reference key="2">
    <citation type="journal article" date="1997" name="Nature">
        <title>The nucleotide sequence of Saccharomyces cerevisiae chromosome XVI.</title>
        <authorList>
            <person name="Bussey H."/>
            <person name="Storms R.K."/>
            <person name="Ahmed A."/>
            <person name="Albermann K."/>
            <person name="Allen E."/>
            <person name="Ansorge W."/>
            <person name="Araujo R."/>
            <person name="Aparicio A."/>
            <person name="Barrell B.G."/>
            <person name="Badcock K."/>
            <person name="Benes V."/>
            <person name="Botstein D."/>
            <person name="Bowman S."/>
            <person name="Brueckner M."/>
            <person name="Carpenter J."/>
            <person name="Cherry J.M."/>
            <person name="Chung E."/>
            <person name="Churcher C.M."/>
            <person name="Coster F."/>
            <person name="Davis K."/>
            <person name="Davis R.W."/>
            <person name="Dietrich F.S."/>
            <person name="Delius H."/>
            <person name="DiPaolo T."/>
            <person name="Dubois E."/>
            <person name="Duesterhoeft A."/>
            <person name="Duncan M."/>
            <person name="Floeth M."/>
            <person name="Fortin N."/>
            <person name="Friesen J.D."/>
            <person name="Fritz C."/>
            <person name="Goffeau A."/>
            <person name="Hall J."/>
            <person name="Hebling U."/>
            <person name="Heumann K."/>
            <person name="Hilbert H."/>
            <person name="Hillier L.W."/>
            <person name="Hunicke-Smith S."/>
            <person name="Hyman R.W."/>
            <person name="Johnston M."/>
            <person name="Kalman S."/>
            <person name="Kleine K."/>
            <person name="Komp C."/>
            <person name="Kurdi O."/>
            <person name="Lashkari D."/>
            <person name="Lew H."/>
            <person name="Lin A."/>
            <person name="Lin D."/>
            <person name="Louis E.J."/>
            <person name="Marathe R."/>
            <person name="Messenguy F."/>
            <person name="Mewes H.-W."/>
            <person name="Mirtipati S."/>
            <person name="Moestl D."/>
            <person name="Mueller-Auer S."/>
            <person name="Namath A."/>
            <person name="Nentwich U."/>
            <person name="Oefner P."/>
            <person name="Pearson D."/>
            <person name="Petel F.X."/>
            <person name="Pohl T.M."/>
            <person name="Purnelle B."/>
            <person name="Rajandream M.A."/>
            <person name="Rechmann S."/>
            <person name="Rieger M."/>
            <person name="Riles L."/>
            <person name="Roberts D."/>
            <person name="Schaefer M."/>
            <person name="Scharfe M."/>
            <person name="Scherens B."/>
            <person name="Schramm S."/>
            <person name="Schroeder M."/>
            <person name="Sdicu A.-M."/>
            <person name="Tettelin H."/>
            <person name="Urrestarazu L.A."/>
            <person name="Ushinsky S."/>
            <person name="Vierendeels F."/>
            <person name="Vissers S."/>
            <person name="Voss H."/>
            <person name="Walsh S.V."/>
            <person name="Wambutt R."/>
            <person name="Wang Y."/>
            <person name="Wedler E."/>
            <person name="Wedler H."/>
            <person name="Winnett E."/>
            <person name="Zhong W.-W."/>
            <person name="Zollner A."/>
            <person name="Vo D.H."/>
            <person name="Hani J."/>
        </authorList>
    </citation>
    <scope>NUCLEOTIDE SEQUENCE [LARGE SCALE GENOMIC DNA]</scope>
    <source>
        <strain>ATCC 204508 / S288c</strain>
    </source>
</reference>
<reference key="3">
    <citation type="journal article" date="2014" name="G3 (Bethesda)">
        <title>The reference genome sequence of Saccharomyces cerevisiae: Then and now.</title>
        <authorList>
            <person name="Engel S.R."/>
            <person name="Dietrich F.S."/>
            <person name="Fisk D.G."/>
            <person name="Binkley G."/>
            <person name="Balakrishnan R."/>
            <person name="Costanzo M.C."/>
            <person name="Dwight S.S."/>
            <person name="Hitz B.C."/>
            <person name="Karra K."/>
            <person name="Nash R.S."/>
            <person name="Weng S."/>
            <person name="Wong E.D."/>
            <person name="Lloyd P."/>
            <person name="Skrzypek M.S."/>
            <person name="Miyasato S.R."/>
            <person name="Simison M."/>
            <person name="Cherry J.M."/>
        </authorList>
    </citation>
    <scope>GENOME REANNOTATION</scope>
    <source>
        <strain>ATCC 204508 / S288c</strain>
    </source>
</reference>
<reference key="4">
    <citation type="journal article" date="2003" name="Nature">
        <title>Global analysis of protein expression in yeast.</title>
        <authorList>
            <person name="Ghaemmaghami S."/>
            <person name="Huh W.-K."/>
            <person name="Bower K."/>
            <person name="Howson R.W."/>
            <person name="Belle A."/>
            <person name="Dephoure N."/>
            <person name="O'Shea E.K."/>
            <person name="Weissman J.S."/>
        </authorList>
    </citation>
    <scope>LEVEL OF PROTEIN EXPRESSION [LARGE SCALE ANALYSIS]</scope>
</reference>
<reference key="5">
    <citation type="journal article" date="2012" name="Proc. Natl. Acad. Sci. U.S.A.">
        <title>N-terminal acetylome analyses and functional insights of the N-terminal acetyltransferase NatB.</title>
        <authorList>
            <person name="Van Damme P."/>
            <person name="Lasa M."/>
            <person name="Polevoda B."/>
            <person name="Gazquez C."/>
            <person name="Elosegui-Artola A."/>
            <person name="Kim D.S."/>
            <person name="De Juan-Pardo E."/>
            <person name="Demeyer K."/>
            <person name="Hole K."/>
            <person name="Larrea E."/>
            <person name="Timmerman E."/>
            <person name="Prieto J."/>
            <person name="Arnesen T."/>
            <person name="Sherman F."/>
            <person name="Gevaert K."/>
            <person name="Aldabe R."/>
        </authorList>
    </citation>
    <scope>IDENTIFICATION BY MASS SPECTROMETRY [LARGE SCALE ANALYSIS]</scope>
</reference>